<sequence length="333" mass="35681">MPPTINMGIPGASSSVTGGVSGKRVLLAEPRGYCAGVDRAVETVERALEKHGAPVYVRHEIVHNRYVVDTLAKAGAVFVEQTDEVPEGAIVVFSAHGVAPTVHVEAAARNLKTIDATCPLVTKVHNEAKRFARDDYDILLVGHEGHEEVVGTAGEAPDHVQVVDNPDAVDKVTVRDPDKVIWLSQTTLSVDETMETVRRLREKFPTLQDPPSDDICYATQNRQVAVKAMAPECELVIVVGSKNSSNSVRLVEVALGAGSDAAHLVDYAEDIDPTWLNGVTTVGVTSGASVPEVLVRGVLDRLAEYGYGTVQPVTTANETLVFALPREIRPARS</sequence>
<keyword id="KW-0004">4Fe-4S</keyword>
<keyword id="KW-0408">Iron</keyword>
<keyword id="KW-0411">Iron-sulfur</keyword>
<keyword id="KW-0414">Isoprene biosynthesis</keyword>
<keyword id="KW-0479">Metal-binding</keyword>
<keyword id="KW-0560">Oxidoreductase</keyword>
<gene>
    <name evidence="1" type="primary">ispH</name>
    <name type="ordered locus">Mkms_4181</name>
</gene>
<organism>
    <name type="scientific">Mycobacterium sp. (strain KMS)</name>
    <dbReference type="NCBI Taxonomy" id="189918"/>
    <lineage>
        <taxon>Bacteria</taxon>
        <taxon>Bacillati</taxon>
        <taxon>Actinomycetota</taxon>
        <taxon>Actinomycetes</taxon>
        <taxon>Mycobacteriales</taxon>
        <taxon>Mycobacteriaceae</taxon>
        <taxon>Mycobacterium</taxon>
    </lineage>
</organism>
<comment type="function">
    <text evidence="1">Catalyzes the conversion of 1-hydroxy-2-methyl-2-(E)-butenyl 4-diphosphate (HMBPP) into a mixture of isopentenyl diphosphate (IPP) and dimethylallyl diphosphate (DMAPP). Acts in the terminal step of the DOXP/MEP pathway for isoprenoid precursor biosynthesis.</text>
</comment>
<comment type="catalytic activity">
    <reaction evidence="1">
        <text>isopentenyl diphosphate + 2 oxidized [2Fe-2S]-[ferredoxin] + H2O = (2E)-4-hydroxy-3-methylbut-2-enyl diphosphate + 2 reduced [2Fe-2S]-[ferredoxin] + 2 H(+)</text>
        <dbReference type="Rhea" id="RHEA:24488"/>
        <dbReference type="Rhea" id="RHEA-COMP:10000"/>
        <dbReference type="Rhea" id="RHEA-COMP:10001"/>
        <dbReference type="ChEBI" id="CHEBI:15377"/>
        <dbReference type="ChEBI" id="CHEBI:15378"/>
        <dbReference type="ChEBI" id="CHEBI:33737"/>
        <dbReference type="ChEBI" id="CHEBI:33738"/>
        <dbReference type="ChEBI" id="CHEBI:128753"/>
        <dbReference type="ChEBI" id="CHEBI:128769"/>
        <dbReference type="EC" id="1.17.7.4"/>
    </reaction>
</comment>
<comment type="catalytic activity">
    <reaction evidence="1">
        <text>dimethylallyl diphosphate + 2 oxidized [2Fe-2S]-[ferredoxin] + H2O = (2E)-4-hydroxy-3-methylbut-2-enyl diphosphate + 2 reduced [2Fe-2S]-[ferredoxin] + 2 H(+)</text>
        <dbReference type="Rhea" id="RHEA:24825"/>
        <dbReference type="Rhea" id="RHEA-COMP:10000"/>
        <dbReference type="Rhea" id="RHEA-COMP:10001"/>
        <dbReference type="ChEBI" id="CHEBI:15377"/>
        <dbReference type="ChEBI" id="CHEBI:15378"/>
        <dbReference type="ChEBI" id="CHEBI:33737"/>
        <dbReference type="ChEBI" id="CHEBI:33738"/>
        <dbReference type="ChEBI" id="CHEBI:57623"/>
        <dbReference type="ChEBI" id="CHEBI:128753"/>
        <dbReference type="EC" id="1.17.7.4"/>
    </reaction>
</comment>
<comment type="cofactor">
    <cofactor evidence="1">
        <name>[4Fe-4S] cluster</name>
        <dbReference type="ChEBI" id="CHEBI:49883"/>
    </cofactor>
    <text evidence="1">Binds 1 [4Fe-4S] cluster per subunit.</text>
</comment>
<comment type="pathway">
    <text evidence="1">Isoprenoid biosynthesis; dimethylallyl diphosphate biosynthesis; dimethylallyl diphosphate from (2E)-4-hydroxy-3-methylbutenyl diphosphate: step 1/1.</text>
</comment>
<comment type="pathway">
    <text evidence="1">Isoprenoid biosynthesis; isopentenyl diphosphate biosynthesis via DXP pathway; isopentenyl diphosphate from 1-deoxy-D-xylulose 5-phosphate: step 6/6.</text>
</comment>
<comment type="similarity">
    <text evidence="1">Belongs to the IspH family.</text>
</comment>
<proteinExistence type="inferred from homology"/>
<protein>
    <recommendedName>
        <fullName evidence="1">4-hydroxy-3-methylbut-2-enyl diphosphate reductase</fullName>
        <shortName evidence="1">HMBPP reductase</shortName>
        <ecNumber evidence="1">1.17.7.4</ecNumber>
    </recommendedName>
</protein>
<reference key="1">
    <citation type="submission" date="2006-12" db="EMBL/GenBank/DDBJ databases">
        <title>Complete sequence of chromosome of Mycobacterium sp. KMS.</title>
        <authorList>
            <consortium name="US DOE Joint Genome Institute"/>
            <person name="Copeland A."/>
            <person name="Lucas S."/>
            <person name="Lapidus A."/>
            <person name="Barry K."/>
            <person name="Detter J.C."/>
            <person name="Glavina del Rio T."/>
            <person name="Hammon N."/>
            <person name="Israni S."/>
            <person name="Dalin E."/>
            <person name="Tice H."/>
            <person name="Pitluck S."/>
            <person name="Kiss H."/>
            <person name="Brettin T."/>
            <person name="Bruce D."/>
            <person name="Han C."/>
            <person name="Tapia R."/>
            <person name="Gilna P."/>
            <person name="Schmutz J."/>
            <person name="Larimer F."/>
            <person name="Land M."/>
            <person name="Hauser L."/>
            <person name="Kyrpides N."/>
            <person name="Mikhailova N."/>
            <person name="Miller C.D."/>
            <person name="Richardson P."/>
        </authorList>
    </citation>
    <scope>NUCLEOTIDE SEQUENCE [LARGE SCALE GENOMIC DNA]</scope>
    <source>
        <strain>KMS</strain>
    </source>
</reference>
<name>ISPH_MYCSK</name>
<evidence type="ECO:0000255" key="1">
    <source>
        <dbReference type="HAMAP-Rule" id="MF_00191"/>
    </source>
</evidence>
<accession>A1UKL5</accession>
<feature type="chain" id="PRO_1000021138" description="4-hydroxy-3-methylbut-2-enyl diphosphate reductase">
    <location>
        <begin position="1"/>
        <end position="333"/>
    </location>
</feature>
<feature type="active site" description="Proton donor" evidence="1">
    <location>
        <position position="148"/>
    </location>
</feature>
<feature type="binding site" evidence="1">
    <location>
        <position position="34"/>
    </location>
    <ligand>
        <name>[4Fe-4S] cluster</name>
        <dbReference type="ChEBI" id="CHEBI:49883"/>
    </ligand>
</feature>
<feature type="binding site" evidence="1">
    <location>
        <position position="63"/>
    </location>
    <ligand>
        <name>(2E)-4-hydroxy-3-methylbut-2-enyl diphosphate</name>
        <dbReference type="ChEBI" id="CHEBI:128753"/>
    </ligand>
</feature>
<feature type="binding site" evidence="1">
    <location>
        <position position="63"/>
    </location>
    <ligand>
        <name>dimethylallyl diphosphate</name>
        <dbReference type="ChEBI" id="CHEBI:57623"/>
    </ligand>
</feature>
<feature type="binding site" evidence="1">
    <location>
        <position position="63"/>
    </location>
    <ligand>
        <name>isopentenyl diphosphate</name>
        <dbReference type="ChEBI" id="CHEBI:128769"/>
    </ligand>
</feature>
<feature type="binding site" evidence="1">
    <location>
        <position position="96"/>
    </location>
    <ligand>
        <name>(2E)-4-hydroxy-3-methylbut-2-enyl diphosphate</name>
        <dbReference type="ChEBI" id="CHEBI:128753"/>
    </ligand>
</feature>
<feature type="binding site" evidence="1">
    <location>
        <position position="96"/>
    </location>
    <ligand>
        <name>dimethylallyl diphosphate</name>
        <dbReference type="ChEBI" id="CHEBI:57623"/>
    </ligand>
</feature>
<feature type="binding site" evidence="1">
    <location>
        <position position="96"/>
    </location>
    <ligand>
        <name>isopentenyl diphosphate</name>
        <dbReference type="ChEBI" id="CHEBI:128769"/>
    </ligand>
</feature>
<feature type="binding site" evidence="1">
    <location>
        <position position="118"/>
    </location>
    <ligand>
        <name>[4Fe-4S] cluster</name>
        <dbReference type="ChEBI" id="CHEBI:49883"/>
    </ligand>
</feature>
<feature type="binding site" evidence="1">
    <location>
        <position position="146"/>
    </location>
    <ligand>
        <name>(2E)-4-hydroxy-3-methylbut-2-enyl diphosphate</name>
        <dbReference type="ChEBI" id="CHEBI:128753"/>
    </ligand>
</feature>
<feature type="binding site" evidence="1">
    <location>
        <position position="146"/>
    </location>
    <ligand>
        <name>dimethylallyl diphosphate</name>
        <dbReference type="ChEBI" id="CHEBI:57623"/>
    </ligand>
</feature>
<feature type="binding site" evidence="1">
    <location>
        <position position="146"/>
    </location>
    <ligand>
        <name>isopentenyl diphosphate</name>
        <dbReference type="ChEBI" id="CHEBI:128769"/>
    </ligand>
</feature>
<feature type="binding site" evidence="1">
    <location>
        <position position="186"/>
    </location>
    <ligand>
        <name>(2E)-4-hydroxy-3-methylbut-2-enyl diphosphate</name>
        <dbReference type="ChEBI" id="CHEBI:128753"/>
    </ligand>
</feature>
<feature type="binding site" evidence="1">
    <location>
        <position position="216"/>
    </location>
    <ligand>
        <name>[4Fe-4S] cluster</name>
        <dbReference type="ChEBI" id="CHEBI:49883"/>
    </ligand>
</feature>
<feature type="binding site" evidence="1">
    <location>
        <position position="244"/>
    </location>
    <ligand>
        <name>(2E)-4-hydroxy-3-methylbut-2-enyl diphosphate</name>
        <dbReference type="ChEBI" id="CHEBI:128753"/>
    </ligand>
</feature>
<feature type="binding site" evidence="1">
    <location>
        <position position="244"/>
    </location>
    <ligand>
        <name>dimethylallyl diphosphate</name>
        <dbReference type="ChEBI" id="CHEBI:57623"/>
    </ligand>
</feature>
<feature type="binding site" evidence="1">
    <location>
        <position position="244"/>
    </location>
    <ligand>
        <name>isopentenyl diphosphate</name>
        <dbReference type="ChEBI" id="CHEBI:128769"/>
    </ligand>
</feature>
<feature type="binding site" evidence="1">
    <location>
        <position position="245"/>
    </location>
    <ligand>
        <name>(2E)-4-hydroxy-3-methylbut-2-enyl diphosphate</name>
        <dbReference type="ChEBI" id="CHEBI:128753"/>
    </ligand>
</feature>
<feature type="binding site" evidence="1">
    <location>
        <position position="245"/>
    </location>
    <ligand>
        <name>dimethylallyl diphosphate</name>
        <dbReference type="ChEBI" id="CHEBI:57623"/>
    </ligand>
</feature>
<feature type="binding site" evidence="1">
    <location>
        <position position="245"/>
    </location>
    <ligand>
        <name>isopentenyl diphosphate</name>
        <dbReference type="ChEBI" id="CHEBI:128769"/>
    </ligand>
</feature>
<feature type="binding site" evidence="1">
    <location>
        <position position="246"/>
    </location>
    <ligand>
        <name>(2E)-4-hydroxy-3-methylbut-2-enyl diphosphate</name>
        <dbReference type="ChEBI" id="CHEBI:128753"/>
    </ligand>
</feature>
<feature type="binding site" evidence="1">
    <location>
        <position position="246"/>
    </location>
    <ligand>
        <name>dimethylallyl diphosphate</name>
        <dbReference type="ChEBI" id="CHEBI:57623"/>
    </ligand>
</feature>
<feature type="binding site" evidence="1">
    <location>
        <position position="246"/>
    </location>
    <ligand>
        <name>isopentenyl diphosphate</name>
        <dbReference type="ChEBI" id="CHEBI:128769"/>
    </ligand>
</feature>
<feature type="binding site" evidence="1">
    <location>
        <position position="289"/>
    </location>
    <ligand>
        <name>(2E)-4-hydroxy-3-methylbut-2-enyl diphosphate</name>
        <dbReference type="ChEBI" id="CHEBI:128753"/>
    </ligand>
</feature>
<feature type="binding site" evidence="1">
    <location>
        <position position="289"/>
    </location>
    <ligand>
        <name>dimethylallyl diphosphate</name>
        <dbReference type="ChEBI" id="CHEBI:57623"/>
    </ligand>
</feature>
<feature type="binding site" evidence="1">
    <location>
        <position position="289"/>
    </location>
    <ligand>
        <name>isopentenyl diphosphate</name>
        <dbReference type="ChEBI" id="CHEBI:128769"/>
    </ligand>
</feature>
<dbReference type="EC" id="1.17.7.4" evidence="1"/>
<dbReference type="EMBL" id="CP000518">
    <property type="protein sequence ID" value="ABL93373.1"/>
    <property type="molecule type" value="Genomic_DNA"/>
</dbReference>
<dbReference type="SMR" id="A1UKL5"/>
<dbReference type="STRING" id="189918.Mkms_4181"/>
<dbReference type="KEGG" id="mkm:Mkms_4181"/>
<dbReference type="HOGENOM" id="CLU_027486_1_0_11"/>
<dbReference type="OrthoDB" id="9804068at2"/>
<dbReference type="UniPathway" id="UPA00056">
    <property type="reaction ID" value="UER00097"/>
</dbReference>
<dbReference type="UniPathway" id="UPA00059">
    <property type="reaction ID" value="UER00105"/>
</dbReference>
<dbReference type="GO" id="GO:0051539">
    <property type="term" value="F:4 iron, 4 sulfur cluster binding"/>
    <property type="evidence" value="ECO:0007669"/>
    <property type="project" value="UniProtKB-UniRule"/>
</dbReference>
<dbReference type="GO" id="GO:0051745">
    <property type="term" value="F:4-hydroxy-3-methylbut-2-enyl diphosphate reductase activity"/>
    <property type="evidence" value="ECO:0007669"/>
    <property type="project" value="UniProtKB-UniRule"/>
</dbReference>
<dbReference type="GO" id="GO:0046872">
    <property type="term" value="F:metal ion binding"/>
    <property type="evidence" value="ECO:0007669"/>
    <property type="project" value="UniProtKB-KW"/>
</dbReference>
<dbReference type="GO" id="GO:0050992">
    <property type="term" value="P:dimethylallyl diphosphate biosynthetic process"/>
    <property type="evidence" value="ECO:0007669"/>
    <property type="project" value="UniProtKB-UniRule"/>
</dbReference>
<dbReference type="GO" id="GO:0019288">
    <property type="term" value="P:isopentenyl diphosphate biosynthetic process, methylerythritol 4-phosphate pathway"/>
    <property type="evidence" value="ECO:0007669"/>
    <property type="project" value="UniProtKB-UniRule"/>
</dbReference>
<dbReference type="GO" id="GO:0016114">
    <property type="term" value="P:terpenoid biosynthetic process"/>
    <property type="evidence" value="ECO:0007669"/>
    <property type="project" value="UniProtKB-UniRule"/>
</dbReference>
<dbReference type="CDD" id="cd13944">
    <property type="entry name" value="lytB_ispH"/>
    <property type="match status" value="1"/>
</dbReference>
<dbReference type="Gene3D" id="3.40.50.11270">
    <property type="match status" value="1"/>
</dbReference>
<dbReference type="Gene3D" id="3.40.1010.20">
    <property type="entry name" value="4-hydroxy-3-methylbut-2-enyl diphosphate reductase, catalytic domain"/>
    <property type="match status" value="2"/>
</dbReference>
<dbReference type="HAMAP" id="MF_00191">
    <property type="entry name" value="IspH"/>
    <property type="match status" value="1"/>
</dbReference>
<dbReference type="InterPro" id="IPR003451">
    <property type="entry name" value="LytB/IspH"/>
</dbReference>
<dbReference type="NCBIfam" id="TIGR00216">
    <property type="entry name" value="ispH_lytB"/>
    <property type="match status" value="1"/>
</dbReference>
<dbReference type="NCBIfam" id="NF002188">
    <property type="entry name" value="PRK01045.1-2"/>
    <property type="match status" value="1"/>
</dbReference>
<dbReference type="NCBIfam" id="NF002189">
    <property type="entry name" value="PRK01045.1-3"/>
    <property type="match status" value="1"/>
</dbReference>
<dbReference type="NCBIfam" id="NF002190">
    <property type="entry name" value="PRK01045.1-4"/>
    <property type="match status" value="1"/>
</dbReference>
<dbReference type="PANTHER" id="PTHR30426">
    <property type="entry name" value="4-HYDROXY-3-METHYLBUT-2-ENYL DIPHOSPHATE REDUCTASE"/>
    <property type="match status" value="1"/>
</dbReference>
<dbReference type="PANTHER" id="PTHR30426:SF0">
    <property type="entry name" value="4-HYDROXY-3-METHYLBUT-2-ENYL DIPHOSPHATE REDUCTASE"/>
    <property type="match status" value="1"/>
</dbReference>
<dbReference type="Pfam" id="PF02401">
    <property type="entry name" value="LYTB"/>
    <property type="match status" value="1"/>
</dbReference>